<comment type="function">
    <text evidence="1">Probable circularly permuted 1,3-beta-glucanase involved in cell wall modification through beta-1,3-glucan network alterations such as increased branching or remodeling.</text>
</comment>
<comment type="catalytic activity">
    <reaction evidence="1">
        <text>Hydrolysis of (1-&gt;3)-beta-D-glucosidic linkages in (1-&gt;3)-beta-D-glucans.</text>
        <dbReference type="EC" id="3.2.1.39"/>
    </reaction>
</comment>
<comment type="subcellular location">
    <subcellularLocation>
        <location evidence="3 7 9">Cell membrane</location>
        <topology evidence="11 12 13">Lipid-anchor</topology>
        <topology evidence="11 12 13">GPI-anchor</topology>
        <orientation evidence="3 7 9">Extracellular side</orientation>
    </subcellularLocation>
    <text>GPI-anchored plasma membrane protein (GPI-PMP).</text>
</comment>
<comment type="induction">
    <text evidence="4 6 8">Induced in response to cell wall damage and DNA replication stress.</text>
</comment>
<comment type="domain">
    <text evidence="1">The conserved ExDxxE motif might be important for catalytic activity.</text>
</comment>
<comment type="PTM">
    <text evidence="7">Extensively N-glycosylated.</text>
</comment>
<comment type="miscellaneous">
    <text evidence="5">Present with 5525 molecules/cell in log phase SD medium.</text>
</comment>
<comment type="similarity">
    <text evidence="10">Belongs to the PGA52 family.</text>
</comment>
<keyword id="KW-1003">Cell membrane</keyword>
<keyword id="KW-0961">Cell wall biogenesis/degradation</keyword>
<keyword id="KW-0903">Direct protein sequencing</keyword>
<keyword id="KW-0325">Glycoprotein</keyword>
<keyword id="KW-0326">Glycosidase</keyword>
<keyword id="KW-0336">GPI-anchor</keyword>
<keyword id="KW-0378">Hydrolase</keyword>
<keyword id="KW-0449">Lipoprotein</keyword>
<keyword id="KW-0472">Membrane</keyword>
<keyword id="KW-1185">Reference proteome</keyword>
<keyword id="KW-0732">Signal</keyword>
<proteinExistence type="evidence at protein level"/>
<evidence type="ECO:0000250" key="1">
    <source>
        <dbReference type="UniProtKB" id="P38288"/>
    </source>
</evidence>
<evidence type="ECO:0000255" key="2"/>
<evidence type="ECO:0000269" key="3">
    <source>
    </source>
</evidence>
<evidence type="ECO:0000269" key="4">
    <source>
    </source>
</evidence>
<evidence type="ECO:0000269" key="5">
    <source>
    </source>
</evidence>
<evidence type="ECO:0000269" key="6">
    <source>
    </source>
</evidence>
<evidence type="ECO:0000269" key="7">
    <source>
    </source>
</evidence>
<evidence type="ECO:0000269" key="8">
    <source>
    </source>
</evidence>
<evidence type="ECO:0000269" key="9">
    <source>
    </source>
</evidence>
<evidence type="ECO:0000305" key="10"/>
<evidence type="ECO:0000305" key="11">
    <source>
    </source>
</evidence>
<evidence type="ECO:0000305" key="12">
    <source>
    </source>
</evidence>
<evidence type="ECO:0000305" key="13">
    <source>
    </source>
</evidence>
<protein>
    <recommendedName>
        <fullName evidence="1">Probable circularly permuted 1,3-beta-glucanase YJL171C</fullName>
        <ecNumber evidence="1">3.2.1.39</ecNumber>
    </recommendedName>
    <alternativeName>
        <fullName>TOS1 homolog</fullName>
    </alternativeName>
</protein>
<sequence length="396" mass="42958">MLQSIVLSVCMFMLHTVAASGPQSYQKLDFTNVGFTGSYVDVNKFKDITNNESCTCEVGDRVWFSGKNAPLADYLSVHFRGPLKLKQFAFYTSPGFTVNNSRSSSDWNRLAYYESSSKTADNVTFLNHGGEASPCLGNALSYASSNGTGSASEATVLADGTLISSDQEYIIYSNVSCPKSGYDKGCGVYRSGIPAYYGYGGTTKMFLFEFEMPTETEKNSSSIGYYDLPAIWLLNDHIARTSQYPTNANCSCWASGCGEYDIFEAMNGTEKNHLYSTFHTFQGIEDLGTGIQSYGYITRNTTGTMKGGVVFDSSGNVVSFISDATPFNGTVSADTVNDLLAAIPENETYSSQLMSISATAPSTTSKSNGVALTKMQNGVWYYILAIFTAFTQVVLI</sequence>
<feature type="signal peptide" evidence="2">
    <location>
        <begin position="1"/>
        <end position="19"/>
    </location>
</feature>
<feature type="chain" id="PRO_0000042986" description="Probable circularly permuted 1,3-beta-glucanase YJL171C">
    <location>
        <begin position="20"/>
        <end position="368"/>
    </location>
</feature>
<feature type="propeptide" id="PRO_0000406124" description="Removed in mature form" evidence="2">
    <location>
        <begin position="369"/>
        <end position="396"/>
    </location>
</feature>
<feature type="short sequence motif" description="ExDxxE motif" evidence="1">
    <location>
        <begin position="259"/>
        <end position="264"/>
    </location>
</feature>
<feature type="lipid moiety-binding region" description="GPI-anchor amidated asparagine" evidence="2">
    <location>
        <position position="368"/>
    </location>
</feature>
<feature type="glycosylation site" description="N-linked (GlcNAc...) asparagine" evidence="2">
    <location>
        <position position="51"/>
    </location>
</feature>
<feature type="glycosylation site" description="N-linked (GlcNAc...) asparagine" evidence="2">
    <location>
        <position position="99"/>
    </location>
</feature>
<feature type="glycosylation site" description="N-linked (GlcNAc...) asparagine" evidence="2">
    <location>
        <position position="122"/>
    </location>
</feature>
<feature type="glycosylation site" description="N-linked (GlcNAc...) asparagine" evidence="2">
    <location>
        <position position="146"/>
    </location>
</feature>
<feature type="glycosylation site" description="N-linked (GlcNAc...) asparagine" evidence="2">
    <location>
        <position position="174"/>
    </location>
</feature>
<feature type="glycosylation site" description="N-linked (GlcNAc...) asparagine" evidence="2">
    <location>
        <position position="219"/>
    </location>
</feature>
<feature type="glycosylation site" description="N-linked (GlcNAc...) asparagine" evidence="2">
    <location>
        <position position="249"/>
    </location>
</feature>
<feature type="glycosylation site" description="N-linked (GlcNAc...) asparagine" evidence="2">
    <location>
        <position position="267"/>
    </location>
</feature>
<feature type="glycosylation site" description="N-linked (GlcNAc...) asparagine" evidence="2">
    <location>
        <position position="300"/>
    </location>
</feature>
<feature type="glycosylation site" description="N-linked (GlcNAc...) asparagine" evidence="2">
    <location>
        <position position="328"/>
    </location>
</feature>
<feature type="glycosylation site" description="N-linked (GlcNAc...) asparagine" evidence="2">
    <location>
        <position position="346"/>
    </location>
</feature>
<feature type="sequence conflict" description="In Ref. 1; CAA89466." evidence="10" ref="1">
    <original>K</original>
    <variation>L</variation>
    <location>
        <position position="366"/>
    </location>
</feature>
<feature type="sequence conflict" description="In Ref. 1; CAA89466." evidence="10" ref="1">
    <original>A</original>
    <variation>R</variation>
    <location>
        <position position="371"/>
    </location>
</feature>
<feature type="sequence conflict" description="In Ref. 1; CAA89466." evidence="10" ref="1">
    <original>K</original>
    <variation>N</variation>
    <location>
        <position position="374"/>
    </location>
</feature>
<dbReference type="EC" id="3.2.1.39" evidence="1"/>
<dbReference type="EMBL" id="Z49446">
    <property type="protein sequence ID" value="CAA89466.1"/>
    <property type="molecule type" value="Genomic_DNA"/>
</dbReference>
<dbReference type="EMBL" id="BK006943">
    <property type="protein sequence ID" value="DAA08633.2"/>
    <property type="molecule type" value="Genomic_DNA"/>
</dbReference>
<dbReference type="PIR" id="S56954">
    <property type="entry name" value="S56954"/>
</dbReference>
<dbReference type="RefSeq" id="NP_012364.2">
    <property type="nucleotide sequence ID" value="NM_001181604.2"/>
</dbReference>
<dbReference type="BioGRID" id="33589">
    <property type="interactions" value="81"/>
</dbReference>
<dbReference type="FunCoup" id="P46992">
    <property type="interactions" value="3"/>
</dbReference>
<dbReference type="IntAct" id="P46992">
    <property type="interactions" value="25"/>
</dbReference>
<dbReference type="STRING" id="4932.YJL171C"/>
<dbReference type="GlyGen" id="P46992">
    <property type="glycosylation" value="11 sites"/>
</dbReference>
<dbReference type="iPTMnet" id="P46992"/>
<dbReference type="PaxDb" id="4932-YJL171C"/>
<dbReference type="PeptideAtlas" id="P46992"/>
<dbReference type="EnsemblFungi" id="YJL171C_mRNA">
    <property type="protein sequence ID" value="YJL171C"/>
    <property type="gene ID" value="YJL171C"/>
</dbReference>
<dbReference type="GeneID" id="853268"/>
<dbReference type="KEGG" id="sce:YJL171C"/>
<dbReference type="AGR" id="SGD:S000003707"/>
<dbReference type="SGD" id="S000003707">
    <property type="gene designation" value="TOH1"/>
</dbReference>
<dbReference type="VEuPathDB" id="FungiDB:YJL171C"/>
<dbReference type="eggNOG" id="ENOG502QSTV">
    <property type="taxonomic scope" value="Eukaryota"/>
</dbReference>
<dbReference type="GeneTree" id="ENSGT00940000176743"/>
<dbReference type="HOGENOM" id="CLU_030276_4_0_1"/>
<dbReference type="InParanoid" id="P46992"/>
<dbReference type="OMA" id="STIHDYQ"/>
<dbReference type="OrthoDB" id="118256at2759"/>
<dbReference type="BioCyc" id="YEAST:G3O-31608-MONOMER"/>
<dbReference type="BioGRID-ORCS" id="853268">
    <property type="hits" value="1 hit in 10 CRISPR screens"/>
</dbReference>
<dbReference type="PRO" id="PR:P46992"/>
<dbReference type="Proteomes" id="UP000002311">
    <property type="component" value="Chromosome X"/>
</dbReference>
<dbReference type="RNAct" id="P46992">
    <property type="molecule type" value="protein"/>
</dbReference>
<dbReference type="GO" id="GO:0005783">
    <property type="term" value="C:endoplasmic reticulum"/>
    <property type="evidence" value="ECO:0007005"/>
    <property type="project" value="SGD"/>
</dbReference>
<dbReference type="GO" id="GO:0009277">
    <property type="term" value="C:fungal-type cell wall"/>
    <property type="evidence" value="ECO:0000314"/>
    <property type="project" value="SGD"/>
</dbReference>
<dbReference type="GO" id="GO:0005739">
    <property type="term" value="C:mitochondrion"/>
    <property type="evidence" value="ECO:0007005"/>
    <property type="project" value="SGD"/>
</dbReference>
<dbReference type="GO" id="GO:0005886">
    <property type="term" value="C:plasma membrane"/>
    <property type="evidence" value="ECO:0007005"/>
    <property type="project" value="SGD"/>
</dbReference>
<dbReference type="GO" id="GO:0098552">
    <property type="term" value="C:side of membrane"/>
    <property type="evidence" value="ECO:0007669"/>
    <property type="project" value="UniProtKB-KW"/>
</dbReference>
<dbReference type="GO" id="GO:0016798">
    <property type="term" value="F:hydrolase activity, acting on glycosyl bonds"/>
    <property type="evidence" value="ECO:0007669"/>
    <property type="project" value="UniProtKB-KW"/>
</dbReference>
<dbReference type="GO" id="GO:0071555">
    <property type="term" value="P:cell wall organization"/>
    <property type="evidence" value="ECO:0007669"/>
    <property type="project" value="UniProtKB-KW"/>
</dbReference>
<dbReference type="Gene3D" id="2.60.120.200">
    <property type="match status" value="1"/>
</dbReference>
<dbReference type="InterPro" id="IPR018805">
    <property type="entry name" value="YJL171C/Tos1_C"/>
</dbReference>
<dbReference type="InterPro" id="IPR018807">
    <property type="entry name" value="YJL171C/Tos1_N"/>
</dbReference>
<dbReference type="PANTHER" id="PTHR31737:SF3">
    <property type="entry name" value="CELL WALL PROTEIN YJL171C"/>
    <property type="match status" value="1"/>
</dbReference>
<dbReference type="PANTHER" id="PTHR31737">
    <property type="entry name" value="PROTEIN TOS1"/>
    <property type="match status" value="1"/>
</dbReference>
<dbReference type="Pfam" id="PF10287">
    <property type="entry name" value="YJL171C_Tos1_C"/>
    <property type="match status" value="1"/>
</dbReference>
<dbReference type="Pfam" id="PF10290">
    <property type="entry name" value="YJL171C_Tos1_N"/>
    <property type="match status" value="1"/>
</dbReference>
<name>TOH1_YEAST</name>
<organism>
    <name type="scientific">Saccharomyces cerevisiae (strain ATCC 204508 / S288c)</name>
    <name type="common">Baker's yeast</name>
    <dbReference type="NCBI Taxonomy" id="559292"/>
    <lineage>
        <taxon>Eukaryota</taxon>
        <taxon>Fungi</taxon>
        <taxon>Dikarya</taxon>
        <taxon>Ascomycota</taxon>
        <taxon>Saccharomycotina</taxon>
        <taxon>Saccharomycetes</taxon>
        <taxon>Saccharomycetales</taxon>
        <taxon>Saccharomycetaceae</taxon>
        <taxon>Saccharomyces</taxon>
    </lineage>
</organism>
<gene>
    <name type="primary">TOH1</name>
    <name type="ordered locus">YJL171C</name>
    <name type="ORF">J0512</name>
</gene>
<reference key="1">
    <citation type="journal article" date="1996" name="EMBO J.">
        <title>Complete nucleotide sequence of Saccharomyces cerevisiae chromosome X.</title>
        <authorList>
            <person name="Galibert F."/>
            <person name="Alexandraki D."/>
            <person name="Baur A."/>
            <person name="Boles E."/>
            <person name="Chalwatzis N."/>
            <person name="Chuat J.-C."/>
            <person name="Coster F."/>
            <person name="Cziepluch C."/>
            <person name="de Haan M."/>
            <person name="Domdey H."/>
            <person name="Durand P."/>
            <person name="Entian K.-D."/>
            <person name="Gatius M."/>
            <person name="Goffeau A."/>
            <person name="Grivell L.A."/>
            <person name="Hennemann A."/>
            <person name="Herbert C.J."/>
            <person name="Heumann K."/>
            <person name="Hilger F."/>
            <person name="Hollenberg C.P."/>
            <person name="Huang M.-E."/>
            <person name="Jacq C."/>
            <person name="Jauniaux J.-C."/>
            <person name="Katsoulou C."/>
            <person name="Kirchrath L."/>
            <person name="Kleine K."/>
            <person name="Kordes E."/>
            <person name="Koetter P."/>
            <person name="Liebl S."/>
            <person name="Louis E.J."/>
            <person name="Manus V."/>
            <person name="Mewes H.-W."/>
            <person name="Miosga T."/>
            <person name="Obermaier B."/>
            <person name="Perea J."/>
            <person name="Pohl T.M."/>
            <person name="Portetelle D."/>
            <person name="Pujol A."/>
            <person name="Purnelle B."/>
            <person name="Ramezani Rad M."/>
            <person name="Rasmussen S.W."/>
            <person name="Rose M."/>
            <person name="Rossau R."/>
            <person name="Schaaff-Gerstenschlaeger I."/>
            <person name="Smits P.H.M."/>
            <person name="Scarcez T."/>
            <person name="Soriano N."/>
            <person name="To Van D."/>
            <person name="Tzermia M."/>
            <person name="Van Broekhoven A."/>
            <person name="Vandenbol M."/>
            <person name="Wedler H."/>
            <person name="von Wettstein D."/>
            <person name="Wambutt R."/>
            <person name="Zagulski M."/>
            <person name="Zollner A."/>
            <person name="Karpfinger-Hartl L."/>
        </authorList>
    </citation>
    <scope>NUCLEOTIDE SEQUENCE [LARGE SCALE GENOMIC DNA]</scope>
    <source>
        <strain>ATCC 204508 / S288c</strain>
    </source>
</reference>
<reference key="2">
    <citation type="journal article" date="2014" name="G3 (Bethesda)">
        <title>The reference genome sequence of Saccharomyces cerevisiae: Then and now.</title>
        <authorList>
            <person name="Engel S.R."/>
            <person name="Dietrich F.S."/>
            <person name="Fisk D.G."/>
            <person name="Binkley G."/>
            <person name="Balakrishnan R."/>
            <person name="Costanzo M.C."/>
            <person name="Dwight S.S."/>
            <person name="Hitz B.C."/>
            <person name="Karra K."/>
            <person name="Nash R.S."/>
            <person name="Weng S."/>
            <person name="Wong E.D."/>
            <person name="Lloyd P."/>
            <person name="Skrzypek M.S."/>
            <person name="Miyasato S.R."/>
            <person name="Simison M."/>
            <person name="Cherry J.M."/>
        </authorList>
    </citation>
    <scope>GENOME REANNOTATION</scope>
    <scope>SEQUENCE REVISION TO 366; 371 AND 374</scope>
    <source>
        <strain>ATCC 204508 / S288c</strain>
    </source>
</reference>
<reference key="3">
    <citation type="submission" date="2005-06" db="UniProtKB">
        <authorList>
            <person name="Bienvenut W.V."/>
            <person name="Peters C."/>
        </authorList>
    </citation>
    <scope>PROTEIN SEQUENCE OF 28-44 AND 191-204</scope>
    <scope>IDENTIFICATION BY MASS SPECTROMETRY</scope>
</reference>
<reference key="4">
    <citation type="journal article" date="1998" name="Mol. Gen. Genet.">
        <title>Screening for glycosylphosphatidylinositol (GPI)-dependent cell wall proteins in Saccharomyces cerevisiae.</title>
        <authorList>
            <person name="Hamada K."/>
            <person name="Fukuchi S."/>
            <person name="Arisawa M."/>
            <person name="Baba M."/>
            <person name="Kitada K."/>
        </authorList>
    </citation>
    <scope>SUBCELLULAR LOCATION</scope>
</reference>
<reference key="5">
    <citation type="journal article" date="1999" name="J. Bacteriol.">
        <title>Amino acid residues in the omega-minus region participate in cellular localization of yeast glycosylphosphatidylinositol-attached proteins.</title>
        <authorList>
            <person name="Hamada K."/>
            <person name="Terashima H."/>
            <person name="Arisawa M."/>
            <person name="Yabuki N."/>
            <person name="Kitada K."/>
        </authorList>
    </citation>
    <scope>GPI-ANCHOR</scope>
    <scope>SUBCELLULAR LOCATION</scope>
</reference>
<reference key="6">
    <citation type="journal article" date="2003" name="J. Biol. Chem.">
        <title>Genome-wide analysis of the response to cell wall mutations in the yeast Saccharomyces cerevisiae.</title>
        <authorList>
            <person name="Lagorce A."/>
            <person name="Hauser N.C."/>
            <person name="Labourdette D."/>
            <person name="Rodriguez C."/>
            <person name="Martin-Yken H."/>
            <person name="Arroyo J."/>
            <person name="Hoheisel J.D."/>
            <person name="Francois J."/>
        </authorList>
    </citation>
    <scope>INDUCTION</scope>
</reference>
<reference key="7">
    <citation type="journal article" date="2003" name="Nature">
        <title>Global analysis of protein expression in yeast.</title>
        <authorList>
            <person name="Ghaemmaghami S."/>
            <person name="Huh W.-K."/>
            <person name="Bower K."/>
            <person name="Howson R.W."/>
            <person name="Belle A."/>
            <person name="Dephoure N."/>
            <person name="O'Shea E.K."/>
            <person name="Weissman J.S."/>
        </authorList>
    </citation>
    <scope>LEVEL OF PROTEIN EXPRESSION [LARGE SCALE ANALYSIS]</scope>
</reference>
<reference key="8">
    <citation type="journal article" date="2008" name="J. Virol.">
        <title>An engineered Saccharomyces cerevisiae strain binds the broadly neutralizing human immunodeficiency virus type 1 antibody 2G12 and elicits mannose-specific gp120-binding antibodies.</title>
        <authorList>
            <person name="Luallen R.J."/>
            <person name="Lin J."/>
            <person name="Fu H."/>
            <person name="Cai K.K."/>
            <person name="Agrawal C."/>
            <person name="Mboudjeka I."/>
            <person name="Lee F.-H."/>
            <person name="Montefiori D."/>
            <person name="Smith D.F."/>
            <person name="Doms R.W."/>
            <person name="Geng Y."/>
        </authorList>
    </citation>
    <scope>SUBCELLULAR LOCATION</scope>
    <scope>GLYCOSYLATION</scope>
    <scope>IDENTIFICATION BY MASS SPECTROMETRY</scope>
</reference>
<reference key="9">
    <citation type="journal article" date="2004" name="J. Biol. Chem.">
        <title>The global transcriptional response to transient cell wall damage in Saccharomyces cerevisiae and its regulation by the cell integrity signaling pathway.</title>
        <authorList>
            <person name="Garcia R."/>
            <person name="Bermejo C."/>
            <person name="Grau C."/>
            <person name="Perez R."/>
            <person name="Rodriguez-Pena J.M."/>
            <person name="Francois J."/>
            <person name="Nombela C."/>
            <person name="Arroyo J."/>
        </authorList>
    </citation>
    <scope>INDUCTION</scope>
</reference>
<reference key="10">
    <citation type="journal article" date="2012" name="Nat. Cell Biol.">
        <title>Dissecting DNA damage response pathways by analysing protein localization and abundance changes during DNA replication stress.</title>
        <authorList>
            <person name="Tkach J.M."/>
            <person name="Yimit A."/>
            <person name="Lee A.Y."/>
            <person name="Riffle M."/>
            <person name="Costanzo M."/>
            <person name="Jaschob D."/>
            <person name="Hendry J.A."/>
            <person name="Ou J."/>
            <person name="Moffat J."/>
            <person name="Boone C."/>
            <person name="Davis T.N."/>
            <person name="Nislow C."/>
            <person name="Brown G.W."/>
        </authorList>
    </citation>
    <scope>INDUCTION</scope>
</reference>
<accession>P46992</accession>
<accession>D6VW17</accession>